<comment type="function">
    <text evidence="1">Catalyzes the phosphorylation of D-fructose 6-phosphate to fructose 1,6-bisphosphate by ATP, the first committing step of glycolysis.</text>
</comment>
<comment type="catalytic activity">
    <reaction evidence="1">
        <text>beta-D-fructose 6-phosphate + ATP = beta-D-fructose 1,6-bisphosphate + ADP + H(+)</text>
        <dbReference type="Rhea" id="RHEA:16109"/>
        <dbReference type="ChEBI" id="CHEBI:15378"/>
        <dbReference type="ChEBI" id="CHEBI:30616"/>
        <dbReference type="ChEBI" id="CHEBI:32966"/>
        <dbReference type="ChEBI" id="CHEBI:57634"/>
        <dbReference type="ChEBI" id="CHEBI:456216"/>
        <dbReference type="EC" id="2.7.1.11"/>
    </reaction>
</comment>
<comment type="cofactor">
    <cofactor evidence="1">
        <name>Mg(2+)</name>
        <dbReference type="ChEBI" id="CHEBI:18420"/>
    </cofactor>
</comment>
<comment type="activity regulation">
    <text evidence="1">Allosterically activated by ADP and other diphosphonucleosides, and allosterically inhibited by phosphoenolpyruvate.</text>
</comment>
<comment type="pathway">
    <text evidence="1">Carbohydrate degradation; glycolysis; D-glyceraldehyde 3-phosphate and glycerone phosphate from D-glucose: step 3/4.</text>
</comment>
<comment type="subunit">
    <text evidence="1">Homotetramer.</text>
</comment>
<comment type="subcellular location">
    <subcellularLocation>
        <location evidence="1">Cytoplasm</location>
    </subcellularLocation>
</comment>
<comment type="similarity">
    <text evidence="1">Belongs to the phosphofructokinase type A (PFKA) family. ATP-dependent PFK group I subfamily. Prokaryotic clade 'B1' sub-subfamily.</text>
</comment>
<protein>
    <recommendedName>
        <fullName evidence="1">ATP-dependent 6-phosphofructokinase</fullName>
        <shortName evidence="1">ATP-PFK</shortName>
        <shortName evidence="1">Phosphofructokinase</shortName>
        <ecNumber evidence="1">2.7.1.11</ecNumber>
    </recommendedName>
    <alternativeName>
        <fullName evidence="1">Phosphohexokinase</fullName>
    </alternativeName>
</protein>
<gene>
    <name evidence="1" type="primary">pfkA</name>
    <name type="ordered locus">LMOf2365_1593</name>
</gene>
<evidence type="ECO:0000255" key="1">
    <source>
        <dbReference type="HAMAP-Rule" id="MF_00339"/>
    </source>
</evidence>
<proteinExistence type="inferred from homology"/>
<sequence>MKRIAILTSGGDAPGMNAATRAVVRKAIYEGLEVYGINYGFLGLVNGDIRKLELGSVGDLLHRGGTFLYSARYPEFATEEGQLKGIEQLKKHQIDGLVVIGGDGSYHGAEALTKRGFPTIGIPGTIDNDISGTDFTIGFDTALNTVLDALDKIRDTATSHERTFIIEVMGRDAGDIALWSGLAGGAEAIIVPEESFNMDDVVDRLNKGRERGKKHSIIVVAEGVMSGNEFAKQLAEYGDYHARVTVLGHVQRGGSPTAFDRVLASRLGARSVELLLENRGGLAVGIRENRIVENDISEILKEKHTLDQKLFDLASILSI</sequence>
<accession>Q71Z96</accession>
<reference key="1">
    <citation type="journal article" date="2004" name="Nucleic Acids Res.">
        <title>Whole genome comparisons of serotype 4b and 1/2a strains of the food-borne pathogen Listeria monocytogenes reveal new insights into the core genome components of this species.</title>
        <authorList>
            <person name="Nelson K.E."/>
            <person name="Fouts D.E."/>
            <person name="Mongodin E.F."/>
            <person name="Ravel J."/>
            <person name="DeBoy R.T."/>
            <person name="Kolonay J.F."/>
            <person name="Rasko D.A."/>
            <person name="Angiuoli S.V."/>
            <person name="Gill S.R."/>
            <person name="Paulsen I.T."/>
            <person name="Peterson J.D."/>
            <person name="White O."/>
            <person name="Nelson W.C."/>
            <person name="Nierman W.C."/>
            <person name="Beanan M.J."/>
            <person name="Brinkac L.M."/>
            <person name="Daugherty S.C."/>
            <person name="Dodson R.J."/>
            <person name="Durkin A.S."/>
            <person name="Madupu R."/>
            <person name="Haft D.H."/>
            <person name="Selengut J."/>
            <person name="Van Aken S.E."/>
            <person name="Khouri H.M."/>
            <person name="Fedorova N."/>
            <person name="Forberger H.A."/>
            <person name="Tran B."/>
            <person name="Kathariou S."/>
            <person name="Wonderling L.D."/>
            <person name="Uhlich G.A."/>
            <person name="Bayles D.O."/>
            <person name="Luchansky J.B."/>
            <person name="Fraser C.M."/>
        </authorList>
    </citation>
    <scope>NUCLEOTIDE SEQUENCE [LARGE SCALE GENOMIC DNA]</scope>
    <source>
        <strain>F2365</strain>
    </source>
</reference>
<name>PFKA_LISMF</name>
<organism>
    <name type="scientific">Listeria monocytogenes serotype 4b (strain F2365)</name>
    <dbReference type="NCBI Taxonomy" id="265669"/>
    <lineage>
        <taxon>Bacteria</taxon>
        <taxon>Bacillati</taxon>
        <taxon>Bacillota</taxon>
        <taxon>Bacilli</taxon>
        <taxon>Bacillales</taxon>
        <taxon>Listeriaceae</taxon>
        <taxon>Listeria</taxon>
    </lineage>
</organism>
<feature type="chain" id="PRO_0000111961" description="ATP-dependent 6-phosphofructokinase">
    <location>
        <begin position="1"/>
        <end position="319"/>
    </location>
</feature>
<feature type="active site" description="Proton acceptor" evidence="1">
    <location>
        <position position="127"/>
    </location>
</feature>
<feature type="binding site" evidence="1">
    <location>
        <position position="11"/>
    </location>
    <ligand>
        <name>ATP</name>
        <dbReference type="ChEBI" id="CHEBI:30616"/>
    </ligand>
</feature>
<feature type="binding site" evidence="1">
    <location>
        <begin position="21"/>
        <end position="25"/>
    </location>
    <ligand>
        <name>ADP</name>
        <dbReference type="ChEBI" id="CHEBI:456216"/>
        <note>allosteric activator; ligand shared between dimeric partners</note>
    </ligand>
</feature>
<feature type="binding site" evidence="1">
    <location>
        <begin position="72"/>
        <end position="73"/>
    </location>
    <ligand>
        <name>ATP</name>
        <dbReference type="ChEBI" id="CHEBI:30616"/>
    </ligand>
</feature>
<feature type="binding site" evidence="1">
    <location>
        <begin position="102"/>
        <end position="105"/>
    </location>
    <ligand>
        <name>ATP</name>
        <dbReference type="ChEBI" id="CHEBI:30616"/>
    </ligand>
</feature>
<feature type="binding site" evidence="1">
    <location>
        <position position="103"/>
    </location>
    <ligand>
        <name>Mg(2+)</name>
        <dbReference type="ChEBI" id="CHEBI:18420"/>
        <note>catalytic</note>
    </ligand>
</feature>
<feature type="binding site" description="in other chain" evidence="1">
    <location>
        <begin position="125"/>
        <end position="127"/>
    </location>
    <ligand>
        <name>substrate</name>
        <note>ligand shared between dimeric partners</note>
    </ligand>
</feature>
<feature type="binding site" description="in other chain" evidence="1">
    <location>
        <position position="154"/>
    </location>
    <ligand>
        <name>ADP</name>
        <dbReference type="ChEBI" id="CHEBI:456216"/>
        <note>allosteric activator; ligand shared between dimeric partners</note>
    </ligand>
</feature>
<feature type="binding site" evidence="1">
    <location>
        <position position="162"/>
    </location>
    <ligand>
        <name>substrate</name>
        <note>ligand shared between dimeric partners</note>
    </ligand>
</feature>
<feature type="binding site" description="in other chain" evidence="1">
    <location>
        <begin position="169"/>
        <end position="171"/>
    </location>
    <ligand>
        <name>substrate</name>
        <note>ligand shared between dimeric partners</note>
    </ligand>
</feature>
<feature type="binding site" description="in other chain" evidence="1">
    <location>
        <begin position="185"/>
        <end position="187"/>
    </location>
    <ligand>
        <name>ADP</name>
        <dbReference type="ChEBI" id="CHEBI:456216"/>
        <note>allosteric activator; ligand shared between dimeric partners</note>
    </ligand>
</feature>
<feature type="binding site" description="in other chain" evidence="1">
    <location>
        <position position="211"/>
    </location>
    <ligand>
        <name>ADP</name>
        <dbReference type="ChEBI" id="CHEBI:456216"/>
        <note>allosteric activator; ligand shared between dimeric partners</note>
    </ligand>
</feature>
<feature type="binding site" description="in other chain" evidence="1">
    <location>
        <begin position="213"/>
        <end position="215"/>
    </location>
    <ligand>
        <name>ADP</name>
        <dbReference type="ChEBI" id="CHEBI:456216"/>
        <note>allosteric activator; ligand shared between dimeric partners</note>
    </ligand>
</feature>
<feature type="binding site" description="in other chain" evidence="1">
    <location>
        <position position="222"/>
    </location>
    <ligand>
        <name>substrate</name>
        <note>ligand shared between dimeric partners</note>
    </ligand>
</feature>
<feature type="binding site" evidence="1">
    <location>
        <position position="243"/>
    </location>
    <ligand>
        <name>substrate</name>
        <note>ligand shared between dimeric partners</note>
    </ligand>
</feature>
<feature type="binding site" description="in other chain" evidence="1">
    <location>
        <begin position="249"/>
        <end position="252"/>
    </location>
    <ligand>
        <name>substrate</name>
        <note>ligand shared between dimeric partners</note>
    </ligand>
</feature>
<keyword id="KW-0021">Allosteric enzyme</keyword>
<keyword id="KW-0067">ATP-binding</keyword>
<keyword id="KW-0963">Cytoplasm</keyword>
<keyword id="KW-0324">Glycolysis</keyword>
<keyword id="KW-0418">Kinase</keyword>
<keyword id="KW-0460">Magnesium</keyword>
<keyword id="KW-0479">Metal-binding</keyword>
<keyword id="KW-0547">Nucleotide-binding</keyword>
<keyword id="KW-0808">Transferase</keyword>
<dbReference type="EC" id="2.7.1.11" evidence="1"/>
<dbReference type="EMBL" id="AE017262">
    <property type="protein sequence ID" value="AAT04368.1"/>
    <property type="molecule type" value="Genomic_DNA"/>
</dbReference>
<dbReference type="RefSeq" id="WP_003723299.1">
    <property type="nucleotide sequence ID" value="NC_002973.6"/>
</dbReference>
<dbReference type="SMR" id="Q71Z96"/>
<dbReference type="GeneID" id="93239450"/>
<dbReference type="KEGG" id="lmf:LMOf2365_1593"/>
<dbReference type="HOGENOM" id="CLU_020655_0_1_9"/>
<dbReference type="UniPathway" id="UPA00109">
    <property type="reaction ID" value="UER00182"/>
</dbReference>
<dbReference type="GO" id="GO:0005945">
    <property type="term" value="C:6-phosphofructokinase complex"/>
    <property type="evidence" value="ECO:0007669"/>
    <property type="project" value="TreeGrafter"/>
</dbReference>
<dbReference type="GO" id="GO:0003872">
    <property type="term" value="F:6-phosphofructokinase activity"/>
    <property type="evidence" value="ECO:0007669"/>
    <property type="project" value="UniProtKB-UniRule"/>
</dbReference>
<dbReference type="GO" id="GO:0016208">
    <property type="term" value="F:AMP binding"/>
    <property type="evidence" value="ECO:0007669"/>
    <property type="project" value="TreeGrafter"/>
</dbReference>
<dbReference type="GO" id="GO:0005524">
    <property type="term" value="F:ATP binding"/>
    <property type="evidence" value="ECO:0007669"/>
    <property type="project" value="UniProtKB-KW"/>
</dbReference>
<dbReference type="GO" id="GO:0070095">
    <property type="term" value="F:fructose-6-phosphate binding"/>
    <property type="evidence" value="ECO:0007669"/>
    <property type="project" value="TreeGrafter"/>
</dbReference>
<dbReference type="GO" id="GO:0042802">
    <property type="term" value="F:identical protein binding"/>
    <property type="evidence" value="ECO:0007669"/>
    <property type="project" value="TreeGrafter"/>
</dbReference>
<dbReference type="GO" id="GO:0046872">
    <property type="term" value="F:metal ion binding"/>
    <property type="evidence" value="ECO:0007669"/>
    <property type="project" value="UniProtKB-KW"/>
</dbReference>
<dbReference type="GO" id="GO:0048029">
    <property type="term" value="F:monosaccharide binding"/>
    <property type="evidence" value="ECO:0007669"/>
    <property type="project" value="TreeGrafter"/>
</dbReference>
<dbReference type="GO" id="GO:0061621">
    <property type="term" value="P:canonical glycolysis"/>
    <property type="evidence" value="ECO:0007669"/>
    <property type="project" value="TreeGrafter"/>
</dbReference>
<dbReference type="GO" id="GO:0030388">
    <property type="term" value="P:fructose 1,6-bisphosphate metabolic process"/>
    <property type="evidence" value="ECO:0007669"/>
    <property type="project" value="TreeGrafter"/>
</dbReference>
<dbReference type="GO" id="GO:0006002">
    <property type="term" value="P:fructose 6-phosphate metabolic process"/>
    <property type="evidence" value="ECO:0007669"/>
    <property type="project" value="InterPro"/>
</dbReference>
<dbReference type="CDD" id="cd00763">
    <property type="entry name" value="Bacterial_PFK"/>
    <property type="match status" value="1"/>
</dbReference>
<dbReference type="FunFam" id="3.40.50.450:FF:000001">
    <property type="entry name" value="ATP-dependent 6-phosphofructokinase"/>
    <property type="match status" value="1"/>
</dbReference>
<dbReference type="FunFam" id="3.40.50.460:FF:000002">
    <property type="entry name" value="ATP-dependent 6-phosphofructokinase"/>
    <property type="match status" value="1"/>
</dbReference>
<dbReference type="Gene3D" id="3.40.50.450">
    <property type="match status" value="1"/>
</dbReference>
<dbReference type="Gene3D" id="3.40.50.460">
    <property type="entry name" value="Phosphofructokinase domain"/>
    <property type="match status" value="1"/>
</dbReference>
<dbReference type="HAMAP" id="MF_00339">
    <property type="entry name" value="Phosphofructokinase_I_B1"/>
    <property type="match status" value="1"/>
</dbReference>
<dbReference type="InterPro" id="IPR022953">
    <property type="entry name" value="ATP_PFK"/>
</dbReference>
<dbReference type="InterPro" id="IPR012003">
    <property type="entry name" value="ATP_PFK_prok-type"/>
</dbReference>
<dbReference type="InterPro" id="IPR012828">
    <property type="entry name" value="PFKA_ATP_prok"/>
</dbReference>
<dbReference type="InterPro" id="IPR015912">
    <property type="entry name" value="Phosphofructokinase_CS"/>
</dbReference>
<dbReference type="InterPro" id="IPR000023">
    <property type="entry name" value="Phosphofructokinase_dom"/>
</dbReference>
<dbReference type="InterPro" id="IPR035966">
    <property type="entry name" value="PKF_sf"/>
</dbReference>
<dbReference type="NCBIfam" id="TIGR02482">
    <property type="entry name" value="PFKA_ATP"/>
    <property type="match status" value="1"/>
</dbReference>
<dbReference type="NCBIfam" id="NF002872">
    <property type="entry name" value="PRK03202.1"/>
    <property type="match status" value="1"/>
</dbReference>
<dbReference type="PANTHER" id="PTHR13697:SF4">
    <property type="entry name" value="ATP-DEPENDENT 6-PHOSPHOFRUCTOKINASE"/>
    <property type="match status" value="1"/>
</dbReference>
<dbReference type="PANTHER" id="PTHR13697">
    <property type="entry name" value="PHOSPHOFRUCTOKINASE"/>
    <property type="match status" value="1"/>
</dbReference>
<dbReference type="Pfam" id="PF00365">
    <property type="entry name" value="PFK"/>
    <property type="match status" value="1"/>
</dbReference>
<dbReference type="PIRSF" id="PIRSF000532">
    <property type="entry name" value="ATP_PFK_prok"/>
    <property type="match status" value="1"/>
</dbReference>
<dbReference type="PRINTS" id="PR00476">
    <property type="entry name" value="PHFRCTKINASE"/>
</dbReference>
<dbReference type="SUPFAM" id="SSF53784">
    <property type="entry name" value="Phosphofructokinase"/>
    <property type="match status" value="1"/>
</dbReference>
<dbReference type="PROSITE" id="PS00433">
    <property type="entry name" value="PHOSPHOFRUCTOKINASE"/>
    <property type="match status" value="1"/>
</dbReference>